<comment type="function">
    <text evidence="1">Catalyzes the condensation of the acetyl group of acetyl-CoA with 3-methyl-2-oxobutanoate (2-ketoisovalerate) to form 3-carboxy-3-hydroxy-4-methylpentanoate (2-isopropylmalate).</text>
</comment>
<comment type="catalytic activity">
    <reaction evidence="1">
        <text>3-methyl-2-oxobutanoate + acetyl-CoA + H2O = (2S)-2-isopropylmalate + CoA + H(+)</text>
        <dbReference type="Rhea" id="RHEA:21524"/>
        <dbReference type="ChEBI" id="CHEBI:1178"/>
        <dbReference type="ChEBI" id="CHEBI:11851"/>
        <dbReference type="ChEBI" id="CHEBI:15377"/>
        <dbReference type="ChEBI" id="CHEBI:15378"/>
        <dbReference type="ChEBI" id="CHEBI:57287"/>
        <dbReference type="ChEBI" id="CHEBI:57288"/>
        <dbReference type="EC" id="2.3.3.13"/>
    </reaction>
</comment>
<comment type="cofactor">
    <cofactor evidence="1">
        <name>Mg(2+)</name>
        <dbReference type="ChEBI" id="CHEBI:18420"/>
    </cofactor>
</comment>
<comment type="pathway">
    <text evidence="1">Amino-acid biosynthesis; L-leucine biosynthesis; L-leucine from 3-methyl-2-oxobutanoate: step 1/4.</text>
</comment>
<comment type="subunit">
    <text evidence="1">Homodimer.</text>
</comment>
<comment type="subcellular location">
    <subcellularLocation>
        <location evidence="1">Cytoplasm</location>
    </subcellularLocation>
</comment>
<comment type="similarity">
    <text evidence="1">Belongs to the alpha-IPM synthase/homocitrate synthase family. LeuA type 2 subfamily.</text>
</comment>
<reference key="1">
    <citation type="journal article" date="2009" name="Genome Biol.">
        <title>Genomic and genetic analyses of diversity and plant interactions of Pseudomonas fluorescens.</title>
        <authorList>
            <person name="Silby M.W."/>
            <person name="Cerdeno-Tarraga A.M."/>
            <person name="Vernikos G.S."/>
            <person name="Giddens S.R."/>
            <person name="Jackson R.W."/>
            <person name="Preston G.M."/>
            <person name="Zhang X.-X."/>
            <person name="Moon C.D."/>
            <person name="Gehrig S.M."/>
            <person name="Godfrey S.A.C."/>
            <person name="Knight C.G."/>
            <person name="Malone J.G."/>
            <person name="Robinson Z."/>
            <person name="Spiers A.J."/>
            <person name="Harris S."/>
            <person name="Challis G.L."/>
            <person name="Yaxley A.M."/>
            <person name="Harris D."/>
            <person name="Seeger K."/>
            <person name="Murphy L."/>
            <person name="Rutter S."/>
            <person name="Squares R."/>
            <person name="Quail M.A."/>
            <person name="Saunders E."/>
            <person name="Mavromatis K."/>
            <person name="Brettin T.S."/>
            <person name="Bentley S.D."/>
            <person name="Hothersall J."/>
            <person name="Stephens E."/>
            <person name="Thomas C.M."/>
            <person name="Parkhill J."/>
            <person name="Levy S.B."/>
            <person name="Rainey P.B."/>
            <person name="Thomson N.R."/>
        </authorList>
    </citation>
    <scope>NUCLEOTIDE SEQUENCE [LARGE SCALE GENOMIC DNA]</scope>
    <source>
        <strain>SBW25</strain>
    </source>
</reference>
<organism>
    <name type="scientific">Pseudomonas fluorescens (strain SBW25)</name>
    <dbReference type="NCBI Taxonomy" id="216595"/>
    <lineage>
        <taxon>Bacteria</taxon>
        <taxon>Pseudomonadati</taxon>
        <taxon>Pseudomonadota</taxon>
        <taxon>Gammaproteobacteria</taxon>
        <taxon>Pseudomonadales</taxon>
        <taxon>Pseudomonadaceae</taxon>
        <taxon>Pseudomonas</taxon>
    </lineage>
</organism>
<name>LEU1_PSEFS</name>
<dbReference type="EC" id="2.3.3.13" evidence="1"/>
<dbReference type="EMBL" id="AM181176">
    <property type="protein sequence ID" value="CAY52035.1"/>
    <property type="molecule type" value="Genomic_DNA"/>
</dbReference>
<dbReference type="RefSeq" id="WP_015885732.1">
    <property type="nucleotide sequence ID" value="NC_012660.1"/>
</dbReference>
<dbReference type="SMR" id="C3K1K7"/>
<dbReference type="STRING" id="294.SRM1_04638"/>
<dbReference type="GeneID" id="93466664"/>
<dbReference type="eggNOG" id="COG0119">
    <property type="taxonomic scope" value="Bacteria"/>
</dbReference>
<dbReference type="HOGENOM" id="CLU_004588_3_0_6"/>
<dbReference type="OrthoDB" id="9803573at2"/>
<dbReference type="UniPathway" id="UPA00048">
    <property type="reaction ID" value="UER00070"/>
</dbReference>
<dbReference type="GO" id="GO:0005737">
    <property type="term" value="C:cytoplasm"/>
    <property type="evidence" value="ECO:0007669"/>
    <property type="project" value="UniProtKB-SubCell"/>
</dbReference>
<dbReference type="GO" id="GO:0003852">
    <property type="term" value="F:2-isopropylmalate synthase activity"/>
    <property type="evidence" value="ECO:0007669"/>
    <property type="project" value="UniProtKB-UniRule"/>
</dbReference>
<dbReference type="GO" id="GO:0003985">
    <property type="term" value="F:acetyl-CoA C-acetyltransferase activity"/>
    <property type="evidence" value="ECO:0007669"/>
    <property type="project" value="UniProtKB-UniRule"/>
</dbReference>
<dbReference type="GO" id="GO:0000287">
    <property type="term" value="F:magnesium ion binding"/>
    <property type="evidence" value="ECO:0007669"/>
    <property type="project" value="UniProtKB-UniRule"/>
</dbReference>
<dbReference type="GO" id="GO:0009098">
    <property type="term" value="P:L-leucine biosynthetic process"/>
    <property type="evidence" value="ECO:0007669"/>
    <property type="project" value="UniProtKB-UniRule"/>
</dbReference>
<dbReference type="CDD" id="cd07942">
    <property type="entry name" value="DRE_TIM_LeuA"/>
    <property type="match status" value="1"/>
</dbReference>
<dbReference type="FunFam" id="3.20.20.70:FF:000045">
    <property type="entry name" value="2-isopropylmalate synthase"/>
    <property type="match status" value="1"/>
</dbReference>
<dbReference type="Gene3D" id="3.30.160.270">
    <property type="match status" value="1"/>
</dbReference>
<dbReference type="Gene3D" id="3.20.20.70">
    <property type="entry name" value="Aldolase class I"/>
    <property type="match status" value="1"/>
</dbReference>
<dbReference type="HAMAP" id="MF_00572">
    <property type="entry name" value="LeuA_type2"/>
    <property type="match status" value="1"/>
</dbReference>
<dbReference type="InterPro" id="IPR013709">
    <property type="entry name" value="2-isopropylmalate_synth_dimer"/>
</dbReference>
<dbReference type="InterPro" id="IPR002034">
    <property type="entry name" value="AIPM/Hcit_synth_CS"/>
</dbReference>
<dbReference type="InterPro" id="IPR013785">
    <property type="entry name" value="Aldolase_TIM"/>
</dbReference>
<dbReference type="InterPro" id="IPR005668">
    <property type="entry name" value="IPM_Synthase"/>
</dbReference>
<dbReference type="InterPro" id="IPR054692">
    <property type="entry name" value="LeuA-like_post-cat"/>
</dbReference>
<dbReference type="InterPro" id="IPR036230">
    <property type="entry name" value="LeuA_allosteric_dom_sf"/>
</dbReference>
<dbReference type="InterPro" id="IPR039371">
    <property type="entry name" value="LeuA_N_DRE-TIM"/>
</dbReference>
<dbReference type="InterPro" id="IPR000891">
    <property type="entry name" value="PYR_CT"/>
</dbReference>
<dbReference type="NCBIfam" id="TIGR00970">
    <property type="entry name" value="leuA_yeast"/>
    <property type="match status" value="1"/>
</dbReference>
<dbReference type="NCBIfam" id="NF002991">
    <property type="entry name" value="PRK03739.1"/>
    <property type="match status" value="1"/>
</dbReference>
<dbReference type="PANTHER" id="PTHR46911">
    <property type="match status" value="1"/>
</dbReference>
<dbReference type="PANTHER" id="PTHR46911:SF1">
    <property type="entry name" value="2-ISOPROPYLMALATE SYNTHASE"/>
    <property type="match status" value="1"/>
</dbReference>
<dbReference type="Pfam" id="PF00682">
    <property type="entry name" value="HMGL-like"/>
    <property type="match status" value="1"/>
</dbReference>
<dbReference type="Pfam" id="PF22615">
    <property type="entry name" value="IPMS_D2"/>
    <property type="match status" value="1"/>
</dbReference>
<dbReference type="Pfam" id="PF08502">
    <property type="entry name" value="LeuA_dimer"/>
    <property type="match status" value="1"/>
</dbReference>
<dbReference type="SMART" id="SM00917">
    <property type="entry name" value="LeuA_dimer"/>
    <property type="match status" value="1"/>
</dbReference>
<dbReference type="SUPFAM" id="SSF110921">
    <property type="entry name" value="2-isopropylmalate synthase LeuA, allosteric (dimerisation) domain"/>
    <property type="match status" value="1"/>
</dbReference>
<dbReference type="SUPFAM" id="SSF51569">
    <property type="entry name" value="Aldolase"/>
    <property type="match status" value="1"/>
</dbReference>
<dbReference type="SUPFAM" id="SSF89000">
    <property type="entry name" value="post-HMGL domain-like"/>
    <property type="match status" value="1"/>
</dbReference>
<dbReference type="PROSITE" id="PS00815">
    <property type="entry name" value="AIPM_HOMOCIT_SYNTH_1"/>
    <property type="match status" value="1"/>
</dbReference>
<dbReference type="PROSITE" id="PS00816">
    <property type="entry name" value="AIPM_HOMOCIT_SYNTH_2"/>
    <property type="match status" value="1"/>
</dbReference>
<dbReference type="PROSITE" id="PS50991">
    <property type="entry name" value="PYR_CT"/>
    <property type="match status" value="1"/>
</dbReference>
<sequence>MSMLKDPSSKYRAFPTIDIPDRTWPSKTITEAPIWCSSDLRDGNQSLIEPMDAVKKLRFWKTLVAVGVKEIEASFPAASQTDFDFVRTLIEDNHIPEDTTIQVLTQGREDLIARTFESLRGAKKAIVHLYNATSPSFRRIVFNQDKEGIKAIAVNAAKLFVKYAAQQPETQWTFEYSPETFSATELEFAKEVCDAVIEVWNPTPEHKMILNLPATVECATPNIYADQIEWFGRHINRRDSVIISLHTHNDRGTGVAATELGLMAGADRVEGCLFGNGERTGNVDLVTVALNMYTQGLDPQLDFSDIDGVRKVVEECNQIQVHPRHPYVGDLVHTAFSGSHQDAIRKGFTQQKDDALWEVPYLPIDPADIGRSYEAVIRVNSQSGKGGIAYLLEQEYDISLPRRMQIEFSQVVQAETDRVGLEMTAPQIYALLQREYLQANTPYALVSHRLQEENGNSFVEVEVSGKGQGETNLHWKGKGNGALEALVAGLPIGVEIMDYNEHAIGAGTNAKAAAYIELRVNGERPVHGVGIDENITTASFKALFSALNRSLSQQEAKAA</sequence>
<proteinExistence type="inferred from homology"/>
<feature type="chain" id="PRO_1000212089" description="2-isopropylmalate synthase">
    <location>
        <begin position="1"/>
        <end position="559"/>
    </location>
</feature>
<feature type="domain" description="Pyruvate carboxyltransferase" evidence="1">
    <location>
        <begin position="33"/>
        <end position="307"/>
    </location>
</feature>
<feature type="region of interest" description="Regulatory domain" evidence="1">
    <location>
        <begin position="439"/>
        <end position="559"/>
    </location>
</feature>
<feature type="binding site" evidence="1">
    <location>
        <position position="42"/>
    </location>
    <ligand>
        <name>Mg(2+)</name>
        <dbReference type="ChEBI" id="CHEBI:18420"/>
    </ligand>
</feature>
<feature type="binding site" evidence="1">
    <location>
        <position position="246"/>
    </location>
    <ligand>
        <name>Mg(2+)</name>
        <dbReference type="ChEBI" id="CHEBI:18420"/>
    </ligand>
</feature>
<feature type="binding site" evidence="1">
    <location>
        <position position="248"/>
    </location>
    <ligand>
        <name>Mg(2+)</name>
        <dbReference type="ChEBI" id="CHEBI:18420"/>
    </ligand>
</feature>
<feature type="binding site" evidence="1">
    <location>
        <position position="282"/>
    </location>
    <ligand>
        <name>Mg(2+)</name>
        <dbReference type="ChEBI" id="CHEBI:18420"/>
    </ligand>
</feature>
<protein>
    <recommendedName>
        <fullName evidence="1">2-isopropylmalate synthase</fullName>
        <ecNumber evidence="1">2.3.3.13</ecNumber>
    </recommendedName>
    <alternativeName>
        <fullName evidence="1">Alpha-IPM synthase</fullName>
    </alternativeName>
    <alternativeName>
        <fullName evidence="1">Alpha-isopropylmalate synthase</fullName>
    </alternativeName>
</protein>
<accession>C3K1K7</accession>
<keyword id="KW-0028">Amino-acid biosynthesis</keyword>
<keyword id="KW-0100">Branched-chain amino acid biosynthesis</keyword>
<keyword id="KW-0963">Cytoplasm</keyword>
<keyword id="KW-0432">Leucine biosynthesis</keyword>
<keyword id="KW-0460">Magnesium</keyword>
<keyword id="KW-0479">Metal-binding</keyword>
<keyword id="KW-0808">Transferase</keyword>
<evidence type="ECO:0000255" key="1">
    <source>
        <dbReference type="HAMAP-Rule" id="MF_00572"/>
    </source>
</evidence>
<gene>
    <name evidence="1" type="primary">leuA</name>
    <name type="ordered locus">PFLU_5050</name>
</gene>